<reference key="1">
    <citation type="submission" date="2006-08" db="EMBL/GenBank/DDBJ databases">
        <authorList>
            <consortium name="NIH - Mammalian Gene Collection (MGC) project"/>
        </authorList>
    </citation>
    <scope>NUCLEOTIDE SEQUENCE [LARGE SCALE MRNA]</scope>
    <source>
        <strain>Hereford</strain>
        <tissue>Hippocampus</tissue>
    </source>
</reference>
<proteinExistence type="evidence at transcript level"/>
<organism>
    <name type="scientific">Bos taurus</name>
    <name type="common">Bovine</name>
    <dbReference type="NCBI Taxonomy" id="9913"/>
    <lineage>
        <taxon>Eukaryota</taxon>
        <taxon>Metazoa</taxon>
        <taxon>Chordata</taxon>
        <taxon>Craniata</taxon>
        <taxon>Vertebrata</taxon>
        <taxon>Euteleostomi</taxon>
        <taxon>Mammalia</taxon>
        <taxon>Eutheria</taxon>
        <taxon>Laurasiatheria</taxon>
        <taxon>Artiodactyla</taxon>
        <taxon>Ruminantia</taxon>
        <taxon>Pecora</taxon>
        <taxon>Bovidae</taxon>
        <taxon>Bovinae</taxon>
        <taxon>Bos</taxon>
    </lineage>
</organism>
<dbReference type="EMBL" id="BC122701">
    <property type="protein sequence ID" value="AAI22702.1"/>
    <property type="molecule type" value="mRNA"/>
</dbReference>
<dbReference type="RefSeq" id="NP_001073073.1">
    <property type="nucleotide sequence ID" value="NM_001079605.1"/>
</dbReference>
<dbReference type="SMR" id="Q05B66"/>
<dbReference type="FunCoup" id="Q05B66">
    <property type="interactions" value="174"/>
</dbReference>
<dbReference type="STRING" id="9913.ENSBTAP00000074083"/>
<dbReference type="PaxDb" id="9913-ENSBTAP00000026120"/>
<dbReference type="GeneID" id="523579"/>
<dbReference type="KEGG" id="bta:523579"/>
<dbReference type="CTD" id="80207"/>
<dbReference type="eggNOG" id="KOG3335">
    <property type="taxonomic scope" value="Eukaryota"/>
</dbReference>
<dbReference type="InParanoid" id="Q05B66"/>
<dbReference type="OrthoDB" id="2129069at2759"/>
<dbReference type="TreeFam" id="TF314653"/>
<dbReference type="Proteomes" id="UP000009136">
    <property type="component" value="Unplaced"/>
</dbReference>
<dbReference type="GO" id="GO:0005739">
    <property type="term" value="C:mitochondrion"/>
    <property type="evidence" value="ECO:0000318"/>
    <property type="project" value="GO_Central"/>
</dbReference>
<dbReference type="GO" id="GO:0019216">
    <property type="term" value="P:regulation of lipid metabolic process"/>
    <property type="evidence" value="ECO:0000318"/>
    <property type="project" value="GO_Central"/>
</dbReference>
<dbReference type="GO" id="GO:0007601">
    <property type="term" value="P:visual perception"/>
    <property type="evidence" value="ECO:0000250"/>
    <property type="project" value="UniProtKB"/>
</dbReference>
<dbReference type="InterPro" id="IPR010754">
    <property type="entry name" value="OPA3-like"/>
</dbReference>
<dbReference type="PANTHER" id="PTHR12499:SF0">
    <property type="entry name" value="OPTIC ATROPHY 3 PROTEIN"/>
    <property type="match status" value="1"/>
</dbReference>
<dbReference type="PANTHER" id="PTHR12499">
    <property type="entry name" value="OPTIC ATROPHY 3 PROTEIN OPA3"/>
    <property type="match status" value="1"/>
</dbReference>
<dbReference type="Pfam" id="PF07047">
    <property type="entry name" value="OPA3"/>
    <property type="match status" value="1"/>
</dbReference>
<feature type="chain" id="PRO_0000326546" description="Optic atrophy 3 protein homolog">
    <location>
        <begin position="1"/>
        <end position="191"/>
    </location>
</feature>
<feature type="region of interest" description="Disordered" evidence="3">
    <location>
        <begin position="163"/>
        <end position="191"/>
    </location>
</feature>
<feature type="coiled-coil region" evidence="2">
    <location>
        <begin position="120"/>
        <end position="143"/>
    </location>
</feature>
<protein>
    <recommendedName>
        <fullName>Optic atrophy 3 protein homolog</fullName>
    </recommendedName>
</protein>
<comment type="function">
    <text evidence="1">May play some role in mitochondrial processes.</text>
</comment>
<comment type="subcellular location">
    <subcellularLocation>
        <location evidence="1">Mitochondrion</location>
    </subcellularLocation>
</comment>
<comment type="similarity">
    <text evidence="4">Belongs to the OPA3 family.</text>
</comment>
<keyword id="KW-0175">Coiled coil</keyword>
<keyword id="KW-0496">Mitochondrion</keyword>
<keyword id="KW-1185">Reference proteome</keyword>
<accession>Q05B66</accession>
<gene>
    <name type="primary">OPA3</name>
</gene>
<evidence type="ECO:0000250" key="1"/>
<evidence type="ECO:0000255" key="2"/>
<evidence type="ECO:0000256" key="3">
    <source>
        <dbReference type="SAM" id="MobiDB-lite"/>
    </source>
</evidence>
<evidence type="ECO:0000305" key="4"/>
<name>OPA3_BOVIN</name>
<sequence length="191" mass="21261">MVVGAFPMAKLLYLGIRQVSKPLANRIKEAARRSEFFKTYICLPPAQLYHWVEMRAKMRLMGFNAETIKPLNEEAAAELGAELLGEATIFLVACGCLVLEYSRQKTQQRRKEGEQLAAWDAMRDEVDHLALVLEALQAQVQAAPPPGALEELQAQMREVRAQLCVQDLPPAPQEEPTPRDEGPPDPGLGQD</sequence>